<sequence>MKYMIITVVILFTCALKMFCEETEEENHLAIPEDPYPSLPLRNYSCNNMACPLKHICGCMPTPITPETPFRDLDCGCYHEFDMMPVCV</sequence>
<evidence type="ECO:0000255" key="1"/>
<evidence type="ECO:0000303" key="2">
    <source>
    </source>
</evidence>
<evidence type="ECO:0000305" key="3"/>
<evidence type="ECO:0000305" key="4">
    <source>
    </source>
</evidence>
<name>TXC1A_SCOAL</name>
<accession>P0DQA7</accession>
<keyword id="KW-1015">Disulfide bond</keyword>
<keyword id="KW-0964">Secreted</keyword>
<keyword id="KW-0732">Signal</keyword>
<keyword id="KW-0800">Toxin</keyword>
<proteinExistence type="inferred from homology"/>
<comment type="subcellular location">
    <subcellularLocation>
        <location evidence="4">Secreted</location>
    </subcellularLocation>
</comment>
<comment type="tissue specificity">
    <text evidence="4">Expressed by the venom gland.</text>
</comment>
<comment type="PTM">
    <text evidence="3">Contains 3 disulfide bonds.</text>
</comment>
<comment type="similarity">
    <text evidence="3">Belongs to the scoloptoxin-12 family.</text>
</comment>
<comment type="online information" name="National Center for Biotechnology Information (NCBI)">
    <link uri="https://www.ncbi.nlm.nih.gov/nuccore/GASK01000039"/>
</comment>
<organism>
    <name type="scientific">Scolopendra alternans</name>
    <name type="common">Florida Keys giant centipede</name>
    <dbReference type="NCBI Taxonomy" id="1329349"/>
    <lineage>
        <taxon>Eukaryota</taxon>
        <taxon>Metazoa</taxon>
        <taxon>Ecdysozoa</taxon>
        <taxon>Arthropoda</taxon>
        <taxon>Myriapoda</taxon>
        <taxon>Chilopoda</taxon>
        <taxon>Pleurostigmophora</taxon>
        <taxon>Scolopendromorpha</taxon>
        <taxon>Scolopendridae</taxon>
        <taxon>Scolopendra</taxon>
    </lineage>
</organism>
<reference key="1">
    <citation type="journal article" date="2014" name="Mol. Biol. Evol.">
        <title>Clawing through evolution: toxin diversification and convergence in the ancient lineage Chilopoda (centipedes).</title>
        <authorList>
            <person name="Undheim E.A."/>
            <person name="Jones A."/>
            <person name="Clauser K.R."/>
            <person name="Holland J.W."/>
            <person name="Pineda S.S."/>
            <person name="King G.F."/>
            <person name="Fry B.G."/>
        </authorList>
    </citation>
    <scope>NUCLEOTIDE SEQUENCE [MRNA]</scope>
    <scope>NOMENCLATURE</scope>
    <source>
        <tissue>Venom gland</tissue>
    </source>
</reference>
<feature type="signal peptide" evidence="1">
    <location>
        <begin position="1"/>
        <end position="20"/>
    </location>
</feature>
<feature type="chain" id="PRO_0000446779" description="U-scoloptoxin(12)-Sa1a" evidence="3">
    <location>
        <begin position="21"/>
        <end position="88"/>
    </location>
</feature>
<protein>
    <recommendedName>
        <fullName evidence="2">U-scoloptoxin(12)-Sa1a</fullName>
        <shortName evidence="2">U-SLPTX(12)-Sa1a</shortName>
    </recommendedName>
</protein>
<dbReference type="GO" id="GO:0005576">
    <property type="term" value="C:extracellular region"/>
    <property type="evidence" value="ECO:0007669"/>
    <property type="project" value="UniProtKB-SubCell"/>
</dbReference>
<dbReference type="GO" id="GO:0090729">
    <property type="term" value="F:toxin activity"/>
    <property type="evidence" value="ECO:0007669"/>
    <property type="project" value="UniProtKB-KW"/>
</dbReference>